<name>TRPB_YERPN</name>
<keyword id="KW-0028">Amino-acid biosynthesis</keyword>
<keyword id="KW-0057">Aromatic amino acid biosynthesis</keyword>
<keyword id="KW-0456">Lyase</keyword>
<keyword id="KW-0663">Pyridoxal phosphate</keyword>
<keyword id="KW-0822">Tryptophan biosynthesis</keyword>
<sequence>MTTLNPYFGEFGGMYVPQILVPALKQLEDAFVSAQLDPEFQAAFQDLLKNYAGRPTALTLCQNLTKGTKTKLYLKREDLLHGGAHKTNQVLGQALLAKRMGKTEIIAETGAGQHGVASALACALLGLKCRIYMGAKDIERQSPNVFRMRLMGAEVIPVHSGSSTLKDACNEALRDWSGTYETAHYMLGTAAGPHPYPTIVREFQRMIGEETKAQILEKEGRLPDAVLACVGGGSNAIGMFADFIDEPDVGLIGVEPAGLGIETGQHGAPLKHGKVGIYFGMKSPMMQTSDGQIEESYSISAGLDFPSVGPQHAYLNSIGRADYVSITDDEALDAFKTLSCKEGIIPALESSHALAHALKMIKADPDKEQILVVNLSGRGDKDIFTVHDILKARGEI</sequence>
<accession>Q1CJ28</accession>
<accession>C4GSW6</accession>
<proteinExistence type="inferred from homology"/>
<protein>
    <recommendedName>
        <fullName evidence="1">Tryptophan synthase beta chain</fullName>
        <ecNumber evidence="1">4.2.1.20</ecNumber>
    </recommendedName>
</protein>
<organism>
    <name type="scientific">Yersinia pestis bv. Antiqua (strain Nepal516)</name>
    <dbReference type="NCBI Taxonomy" id="377628"/>
    <lineage>
        <taxon>Bacteria</taxon>
        <taxon>Pseudomonadati</taxon>
        <taxon>Pseudomonadota</taxon>
        <taxon>Gammaproteobacteria</taxon>
        <taxon>Enterobacterales</taxon>
        <taxon>Yersiniaceae</taxon>
        <taxon>Yersinia</taxon>
    </lineage>
</organism>
<comment type="function">
    <text evidence="1">The beta subunit is responsible for the synthesis of L-tryptophan from indole and L-serine.</text>
</comment>
<comment type="catalytic activity">
    <reaction evidence="1">
        <text>(1S,2R)-1-C-(indol-3-yl)glycerol 3-phosphate + L-serine = D-glyceraldehyde 3-phosphate + L-tryptophan + H2O</text>
        <dbReference type="Rhea" id="RHEA:10532"/>
        <dbReference type="ChEBI" id="CHEBI:15377"/>
        <dbReference type="ChEBI" id="CHEBI:33384"/>
        <dbReference type="ChEBI" id="CHEBI:57912"/>
        <dbReference type="ChEBI" id="CHEBI:58866"/>
        <dbReference type="ChEBI" id="CHEBI:59776"/>
        <dbReference type="EC" id="4.2.1.20"/>
    </reaction>
</comment>
<comment type="cofactor">
    <cofactor evidence="1">
        <name>pyridoxal 5'-phosphate</name>
        <dbReference type="ChEBI" id="CHEBI:597326"/>
    </cofactor>
</comment>
<comment type="pathway">
    <text evidence="1">Amino-acid biosynthesis; L-tryptophan biosynthesis; L-tryptophan from chorismate: step 5/5.</text>
</comment>
<comment type="subunit">
    <text evidence="1">Tetramer of two alpha and two beta chains.</text>
</comment>
<comment type="similarity">
    <text evidence="1">Belongs to the TrpB family.</text>
</comment>
<evidence type="ECO:0000255" key="1">
    <source>
        <dbReference type="HAMAP-Rule" id="MF_00133"/>
    </source>
</evidence>
<dbReference type="EC" id="4.2.1.20" evidence="1"/>
<dbReference type="EMBL" id="CP000305">
    <property type="protein sequence ID" value="ABG18002.1"/>
    <property type="molecule type" value="Genomic_DNA"/>
</dbReference>
<dbReference type="EMBL" id="ACNQ01000009">
    <property type="protein sequence ID" value="EEO77126.1"/>
    <property type="molecule type" value="Genomic_DNA"/>
</dbReference>
<dbReference type="RefSeq" id="WP_002210633.1">
    <property type="nucleotide sequence ID" value="NZ_ACNQ01000009.1"/>
</dbReference>
<dbReference type="SMR" id="Q1CJ28"/>
<dbReference type="GeneID" id="57976463"/>
<dbReference type="KEGG" id="ypn:YPN_1673"/>
<dbReference type="HOGENOM" id="CLU_016734_3_1_6"/>
<dbReference type="UniPathway" id="UPA00035">
    <property type="reaction ID" value="UER00044"/>
</dbReference>
<dbReference type="Proteomes" id="UP000008936">
    <property type="component" value="Chromosome"/>
</dbReference>
<dbReference type="GO" id="GO:0005737">
    <property type="term" value="C:cytoplasm"/>
    <property type="evidence" value="ECO:0007669"/>
    <property type="project" value="TreeGrafter"/>
</dbReference>
<dbReference type="GO" id="GO:0004834">
    <property type="term" value="F:tryptophan synthase activity"/>
    <property type="evidence" value="ECO:0007669"/>
    <property type="project" value="UniProtKB-UniRule"/>
</dbReference>
<dbReference type="CDD" id="cd06446">
    <property type="entry name" value="Trp-synth_B"/>
    <property type="match status" value="1"/>
</dbReference>
<dbReference type="FunFam" id="3.40.50.1100:FF:000001">
    <property type="entry name" value="Tryptophan synthase beta chain"/>
    <property type="match status" value="1"/>
</dbReference>
<dbReference type="FunFam" id="3.40.50.1100:FF:000004">
    <property type="entry name" value="Tryptophan synthase beta chain"/>
    <property type="match status" value="1"/>
</dbReference>
<dbReference type="Gene3D" id="3.40.50.1100">
    <property type="match status" value="2"/>
</dbReference>
<dbReference type="HAMAP" id="MF_00133">
    <property type="entry name" value="Trp_synth_beta"/>
    <property type="match status" value="1"/>
</dbReference>
<dbReference type="InterPro" id="IPR006653">
    <property type="entry name" value="Trp_synth_b_CS"/>
</dbReference>
<dbReference type="InterPro" id="IPR006654">
    <property type="entry name" value="Trp_synth_beta"/>
</dbReference>
<dbReference type="InterPro" id="IPR023026">
    <property type="entry name" value="Trp_synth_beta/beta-like"/>
</dbReference>
<dbReference type="InterPro" id="IPR001926">
    <property type="entry name" value="TrpB-like_PALP"/>
</dbReference>
<dbReference type="InterPro" id="IPR036052">
    <property type="entry name" value="TrpB-like_PALP_sf"/>
</dbReference>
<dbReference type="NCBIfam" id="TIGR00263">
    <property type="entry name" value="trpB"/>
    <property type="match status" value="1"/>
</dbReference>
<dbReference type="PANTHER" id="PTHR48077:SF3">
    <property type="entry name" value="TRYPTOPHAN SYNTHASE"/>
    <property type="match status" value="1"/>
</dbReference>
<dbReference type="PANTHER" id="PTHR48077">
    <property type="entry name" value="TRYPTOPHAN SYNTHASE-RELATED"/>
    <property type="match status" value="1"/>
</dbReference>
<dbReference type="Pfam" id="PF00291">
    <property type="entry name" value="PALP"/>
    <property type="match status" value="1"/>
</dbReference>
<dbReference type="PIRSF" id="PIRSF001413">
    <property type="entry name" value="Trp_syn_beta"/>
    <property type="match status" value="1"/>
</dbReference>
<dbReference type="SUPFAM" id="SSF53686">
    <property type="entry name" value="Tryptophan synthase beta subunit-like PLP-dependent enzymes"/>
    <property type="match status" value="1"/>
</dbReference>
<dbReference type="PROSITE" id="PS00168">
    <property type="entry name" value="TRP_SYNTHASE_BETA"/>
    <property type="match status" value="1"/>
</dbReference>
<gene>
    <name evidence="1" type="primary">trpB</name>
    <name type="ordered locus">YPN_1673</name>
    <name type="ORF">YP516_1861</name>
</gene>
<feature type="chain" id="PRO_1000018426" description="Tryptophan synthase beta chain">
    <location>
        <begin position="1"/>
        <end position="396"/>
    </location>
</feature>
<feature type="modified residue" description="N6-(pyridoxal phosphate)lysine" evidence="1">
    <location>
        <position position="86"/>
    </location>
</feature>
<reference key="1">
    <citation type="journal article" date="2006" name="J. Bacteriol.">
        <title>Complete genome sequence of Yersinia pestis strains Antiqua and Nepal516: evidence of gene reduction in an emerging pathogen.</title>
        <authorList>
            <person name="Chain P.S.G."/>
            <person name="Hu P."/>
            <person name="Malfatti S.A."/>
            <person name="Radnedge L."/>
            <person name="Larimer F."/>
            <person name="Vergez L.M."/>
            <person name="Worsham P."/>
            <person name="Chu M.C."/>
            <person name="Andersen G.L."/>
        </authorList>
    </citation>
    <scope>NUCLEOTIDE SEQUENCE [LARGE SCALE GENOMIC DNA]</scope>
    <source>
        <strain>Nepal516</strain>
    </source>
</reference>
<reference key="2">
    <citation type="submission" date="2009-04" db="EMBL/GenBank/DDBJ databases">
        <title>Yersinia pestis Nepal516A whole genome shotgun sequencing project.</title>
        <authorList>
            <person name="Plunkett G. III"/>
            <person name="Anderson B.D."/>
            <person name="Baumler D.J."/>
            <person name="Burland V."/>
            <person name="Cabot E.L."/>
            <person name="Glasner J.D."/>
            <person name="Mau B."/>
            <person name="Neeno-Eckwall E."/>
            <person name="Perna N.T."/>
            <person name="Munk A.C."/>
            <person name="Tapia R."/>
            <person name="Green L.D."/>
            <person name="Rogers Y.C."/>
            <person name="Detter J.C."/>
            <person name="Bruce D.C."/>
            <person name="Brettin T.S."/>
        </authorList>
    </citation>
    <scope>NUCLEOTIDE SEQUENCE [LARGE SCALE GENOMIC DNA]</scope>
    <source>
        <strain>Nepal516</strain>
    </source>
</reference>